<name>K_BPPHS</name>
<accession>P69594</accession>
<accession>P03653</accession>
<sequence length="56" mass="6392">MSRKIILIKQELLLLVYELNRSGLLAENEKIRPILAQLEKLLLCDLSPSTNDSVKN</sequence>
<evidence type="ECO:0000269" key="1">
    <source>
    </source>
</evidence>
<evidence type="ECO:0000305" key="2"/>
<protein>
    <recommendedName>
        <fullName>Protein K</fullName>
    </recommendedName>
</protein>
<proteinExistence type="inferred from homology"/>
<comment type="function">
    <text evidence="1">Somehow affects phage production, although the protein does not seem to be essential.</text>
</comment>
<comment type="miscellaneous">
    <text>Gene K overlaps genes B, A, and C.</text>
</comment>
<comment type="similarity">
    <text evidence="2">Belongs to the microvirus K protein family.</text>
</comment>
<organism>
    <name type="scientific">Enterobacteria phage phiX174</name>
    <name type="common">Isolate Sanger</name>
    <name type="synonym">Bacteriophage phi-X174</name>
    <dbReference type="NCBI Taxonomy" id="1217068"/>
    <lineage>
        <taxon>Viruses</taxon>
        <taxon>Monodnaviria</taxon>
        <taxon>Sangervirae</taxon>
        <taxon>Phixviricota</taxon>
        <taxon>Malgrandaviricetes</taxon>
        <taxon>Petitvirales</taxon>
        <taxon>Microviridae</taxon>
        <taxon>Bullavirinae</taxon>
        <taxon>Sinsheimervirus</taxon>
        <taxon>Escherichia phage phiX174</taxon>
    </lineage>
</organism>
<keyword id="KW-1185">Reference proteome</keyword>
<gene>
    <name type="primary">K</name>
</gene>
<dbReference type="EMBL" id="J02482">
    <property type="protein sequence ID" value="AAA32573.1"/>
    <property type="molecule type" value="Genomic_DNA"/>
</dbReference>
<dbReference type="PIR" id="F93185">
    <property type="entry name" value="ZKBPF4"/>
</dbReference>
<dbReference type="SMR" id="P69594"/>
<dbReference type="KEGG" id="vg:2546403"/>
<dbReference type="Proteomes" id="UP000005893">
    <property type="component" value="Segment"/>
</dbReference>
<dbReference type="InterPro" id="IPR020962">
    <property type="entry name" value="Phage_phiX174_GpK"/>
</dbReference>
<dbReference type="Pfam" id="PF12283">
    <property type="entry name" value="Protein_K"/>
    <property type="match status" value="1"/>
</dbReference>
<organismHost>
    <name type="scientific">Escherichia coli C</name>
    <dbReference type="NCBI Taxonomy" id="498388"/>
</organismHost>
<reference key="1">
    <citation type="journal article" date="1977" name="Nature">
        <title>Nucleotide sequence of bacteriophage phi X174 DNA.</title>
        <authorList>
            <person name="Sanger F."/>
            <person name="Air G.M."/>
            <person name="Barrell B.G."/>
            <person name="Brown N.L."/>
            <person name="Coulson A.R."/>
            <person name="Fiddes J.C."/>
            <person name="Hutchison C.A. III"/>
            <person name="Slocombe P.M."/>
            <person name="Smith M."/>
        </authorList>
    </citation>
    <scope>NUCLEOTIDE SEQUENCE [GENOMIC DNA]</scope>
</reference>
<reference key="2">
    <citation type="journal article" date="1978" name="J. Mol. Biol.">
        <title>The nucleotide sequence of bacteriophage phiX174.</title>
        <authorList>
            <person name="Sanger F."/>
            <person name="Coulson A.R."/>
            <person name="Friedmann T."/>
            <person name="Air G.M."/>
            <person name="Barrell B.G."/>
            <person name="Brown N.L."/>
            <person name="Fiddes J.C."/>
            <person name="Hutchison C.A. III"/>
            <person name="Slocombe P.M."/>
            <person name="Smith M."/>
        </authorList>
    </citation>
    <scope>SEQUENCE REVISION</scope>
</reference>
<reference key="3">
    <citation type="journal article" date="1985" name="J. Virol.">
        <title>Gene K of bacteriophage phi X174 codes for a protein which affects the burst size of phage production.</title>
        <authorList>
            <person name="Gillam S."/>
            <person name="Atkinson T."/>
            <person name="Markham A."/>
            <person name="Smith M."/>
        </authorList>
    </citation>
    <scope>FUNCTION</scope>
</reference>
<feature type="chain" id="PRO_0000164912" description="Protein K">
    <location>
        <begin position="1"/>
        <end position="56"/>
    </location>
</feature>